<evidence type="ECO:0000255" key="1">
    <source>
        <dbReference type="HAMAP-Rule" id="MF_00275"/>
    </source>
</evidence>
<organism>
    <name type="scientific">Rhizobium rhizogenes (strain K84 / ATCC BAA-868)</name>
    <name type="common">Agrobacterium radiobacter</name>
    <dbReference type="NCBI Taxonomy" id="311403"/>
    <lineage>
        <taxon>Bacteria</taxon>
        <taxon>Pseudomonadati</taxon>
        <taxon>Pseudomonadota</taxon>
        <taxon>Alphaproteobacteria</taxon>
        <taxon>Hyphomicrobiales</taxon>
        <taxon>Rhizobiaceae</taxon>
        <taxon>Rhizobium/Agrobacterium group</taxon>
        <taxon>Rhizobium</taxon>
    </lineage>
</organism>
<proteinExistence type="inferred from homology"/>
<comment type="function">
    <text evidence="1">Part of the high-affinity ATP-driven potassium transport (or Kdp) system, which catalyzes the hydrolysis of ATP coupled with the electrogenic transport of potassium into the cytoplasm. This subunit binds the periplasmic potassium ions and delivers the ions to the membrane domain of KdpB through an intramembrane tunnel.</text>
</comment>
<comment type="subunit">
    <text evidence="1">The system is composed of three essential subunits: KdpA, KdpB and KdpC.</text>
</comment>
<comment type="subcellular location">
    <subcellularLocation>
        <location evidence="1">Cell inner membrane</location>
        <topology evidence="1">Multi-pass membrane protein</topology>
    </subcellularLocation>
</comment>
<comment type="similarity">
    <text evidence="1">Belongs to the KdpA family.</text>
</comment>
<gene>
    <name evidence="1" type="primary">kdpA</name>
    <name type="ordered locus">Arad_9462</name>
</gene>
<keyword id="KW-0997">Cell inner membrane</keyword>
<keyword id="KW-1003">Cell membrane</keyword>
<keyword id="KW-0406">Ion transport</keyword>
<keyword id="KW-0472">Membrane</keyword>
<keyword id="KW-0630">Potassium</keyword>
<keyword id="KW-0633">Potassium transport</keyword>
<keyword id="KW-0812">Transmembrane</keyword>
<keyword id="KW-1133">Transmembrane helix</keyword>
<keyword id="KW-0813">Transport</keyword>
<protein>
    <recommendedName>
        <fullName evidence="1">Potassium-transporting ATPase potassium-binding subunit</fullName>
    </recommendedName>
    <alternativeName>
        <fullName evidence="1">ATP phosphohydrolase [potassium-transporting] A chain</fullName>
    </alternativeName>
    <alternativeName>
        <fullName evidence="1">Potassium-binding and translocating subunit A</fullName>
    </alternativeName>
    <alternativeName>
        <fullName evidence="1">Potassium-translocating ATPase A chain</fullName>
    </alternativeName>
</protein>
<dbReference type="EMBL" id="CP000629">
    <property type="protein sequence ID" value="ACM30499.1"/>
    <property type="molecule type" value="Genomic_DNA"/>
</dbReference>
<dbReference type="RefSeq" id="WP_015917797.1">
    <property type="nucleotide sequence ID" value="NC_011983.1"/>
</dbReference>
<dbReference type="SMR" id="B9JKQ7"/>
<dbReference type="STRING" id="311403.Arad_9462"/>
<dbReference type="KEGG" id="ara:Arad_9462"/>
<dbReference type="eggNOG" id="COG2060">
    <property type="taxonomic scope" value="Bacteria"/>
</dbReference>
<dbReference type="HOGENOM" id="CLU_018614_3_0_5"/>
<dbReference type="Proteomes" id="UP000001600">
    <property type="component" value="Chromosome 2"/>
</dbReference>
<dbReference type="GO" id="GO:0005886">
    <property type="term" value="C:plasma membrane"/>
    <property type="evidence" value="ECO:0007669"/>
    <property type="project" value="UniProtKB-SubCell"/>
</dbReference>
<dbReference type="GO" id="GO:0008556">
    <property type="term" value="F:P-type potassium transmembrane transporter activity"/>
    <property type="evidence" value="ECO:0007669"/>
    <property type="project" value="InterPro"/>
</dbReference>
<dbReference type="GO" id="GO:0030955">
    <property type="term" value="F:potassium ion binding"/>
    <property type="evidence" value="ECO:0007669"/>
    <property type="project" value="UniProtKB-UniRule"/>
</dbReference>
<dbReference type="HAMAP" id="MF_00275">
    <property type="entry name" value="KdpA"/>
    <property type="match status" value="1"/>
</dbReference>
<dbReference type="InterPro" id="IPR004623">
    <property type="entry name" value="KdpA"/>
</dbReference>
<dbReference type="NCBIfam" id="TIGR00680">
    <property type="entry name" value="kdpA"/>
    <property type="match status" value="1"/>
</dbReference>
<dbReference type="PANTHER" id="PTHR30607">
    <property type="entry name" value="POTASSIUM-TRANSPORTING ATPASE A CHAIN"/>
    <property type="match status" value="1"/>
</dbReference>
<dbReference type="PANTHER" id="PTHR30607:SF2">
    <property type="entry name" value="POTASSIUM-TRANSPORTING ATPASE POTASSIUM-BINDING SUBUNIT"/>
    <property type="match status" value="1"/>
</dbReference>
<dbReference type="Pfam" id="PF03814">
    <property type="entry name" value="KdpA"/>
    <property type="match status" value="1"/>
</dbReference>
<dbReference type="PIRSF" id="PIRSF001294">
    <property type="entry name" value="K_ATPaseA"/>
    <property type="match status" value="1"/>
</dbReference>
<reference key="1">
    <citation type="journal article" date="2009" name="J. Bacteriol.">
        <title>Genome sequences of three Agrobacterium biovars help elucidate the evolution of multichromosome genomes in bacteria.</title>
        <authorList>
            <person name="Slater S.C."/>
            <person name="Goldman B.S."/>
            <person name="Goodner B."/>
            <person name="Setubal J.C."/>
            <person name="Farrand S.K."/>
            <person name="Nester E.W."/>
            <person name="Burr T.J."/>
            <person name="Banta L."/>
            <person name="Dickerman A.W."/>
            <person name="Paulsen I."/>
            <person name="Otten L."/>
            <person name="Suen G."/>
            <person name="Welch R."/>
            <person name="Almeida N.F."/>
            <person name="Arnold F."/>
            <person name="Burton O.T."/>
            <person name="Du Z."/>
            <person name="Ewing A."/>
            <person name="Godsy E."/>
            <person name="Heisel S."/>
            <person name="Houmiel K.L."/>
            <person name="Jhaveri J."/>
            <person name="Lu J."/>
            <person name="Miller N.M."/>
            <person name="Norton S."/>
            <person name="Chen Q."/>
            <person name="Phoolcharoen W."/>
            <person name="Ohlin V."/>
            <person name="Ondrusek D."/>
            <person name="Pride N."/>
            <person name="Stricklin S.L."/>
            <person name="Sun J."/>
            <person name="Wheeler C."/>
            <person name="Wilson L."/>
            <person name="Zhu H."/>
            <person name="Wood D.W."/>
        </authorList>
    </citation>
    <scope>NUCLEOTIDE SEQUENCE [LARGE SCALE GENOMIC DNA]</scope>
    <source>
        <strain>K84 / ATCC BAA-868</strain>
    </source>
</reference>
<name>KDPA_RHIR8</name>
<accession>B9JKQ7</accession>
<feature type="chain" id="PRO_1000190727" description="Potassium-transporting ATPase potassium-binding subunit">
    <location>
        <begin position="1"/>
        <end position="567"/>
    </location>
</feature>
<feature type="transmembrane region" description="Helical" evidence="1">
    <location>
        <begin position="5"/>
        <end position="25"/>
    </location>
</feature>
<feature type="transmembrane region" description="Helical" evidence="1">
    <location>
        <begin position="64"/>
        <end position="84"/>
    </location>
</feature>
<feature type="transmembrane region" description="Helical" evidence="1">
    <location>
        <begin position="136"/>
        <end position="156"/>
    </location>
</feature>
<feature type="transmembrane region" description="Helical" evidence="1">
    <location>
        <begin position="179"/>
        <end position="199"/>
    </location>
</feature>
<feature type="transmembrane region" description="Helical" evidence="1">
    <location>
        <begin position="254"/>
        <end position="274"/>
    </location>
</feature>
<feature type="transmembrane region" description="Helical" evidence="1">
    <location>
        <begin position="285"/>
        <end position="305"/>
    </location>
</feature>
<feature type="transmembrane region" description="Helical" evidence="1">
    <location>
        <begin position="328"/>
        <end position="350"/>
    </location>
</feature>
<feature type="transmembrane region" description="Helical" evidence="1">
    <location>
        <begin position="375"/>
        <end position="395"/>
    </location>
</feature>
<feature type="transmembrane region" description="Helical" evidence="1">
    <location>
        <begin position="421"/>
        <end position="441"/>
    </location>
</feature>
<feature type="transmembrane region" description="Helical" evidence="1">
    <location>
        <begin position="459"/>
        <end position="481"/>
    </location>
</feature>
<feature type="transmembrane region" description="Helical" evidence="1">
    <location>
        <begin position="486"/>
        <end position="506"/>
    </location>
</feature>
<feature type="transmembrane region" description="Helical" evidence="1">
    <location>
        <begin position="529"/>
        <end position="549"/>
    </location>
</feature>
<sequence>MTFNGWLQILIYIGILLLLVKPLGGYMTRVFTGERTLLSYVLGPLERGLYRIAGTDEREEQHWTTYSISMLLFSLAGFLMLYFLQRFQASLPYNPAGMTSIGPELSFNNAASFVTNTNWQNYGGESTMSYLVQMAGFTVQNFVSAATGIALAIALIRAFSRASGKAIGNFWVDLTRATLYVLLPACIVMTLVFVYLGVPQTLGPYVNATTLEGAQQTIAVGPVASQLAIKMLGTNGGGFFNANSAHPFENPDAISNLIQMLAIFAIGAALTNVFGRMVGNQRQGWAILAAMGTLFIAGVIVTYWAEAAGNPLVHALGVQGGNMEGKEVRFGITMSSLFAVITTAASCGAVNGMLGSFTAIGGMIPLINLQLGEVIVGGVGAGFYGILMFVIIAIFVSGLMVGRTPEYLGKKIEAKEVKMAMLAVLCLPAGMLIFTAISVVLPSAVASIGNPGPHGFSEILYAYSSAAANNGSAFAGLSANTTWYNITLGVVMLIGRFLVIVPALAIAGSLIAKKTVPASAGTFPTDGPLFVGLLVGTILIVGGLTFFPALALGPIVEHLSMIAGQAF</sequence>